<accession>C3PFX5</accession>
<dbReference type="EC" id="1.1.1.85" evidence="1"/>
<dbReference type="EMBL" id="CP001601">
    <property type="protein sequence ID" value="ACP32729.1"/>
    <property type="molecule type" value="Genomic_DNA"/>
</dbReference>
<dbReference type="RefSeq" id="WP_010186893.1">
    <property type="nucleotide sequence ID" value="NC_012590.1"/>
</dbReference>
<dbReference type="SMR" id="C3PFX5"/>
<dbReference type="STRING" id="548476.cauri_1136"/>
<dbReference type="GeneID" id="31923756"/>
<dbReference type="KEGG" id="car:cauri_1136"/>
<dbReference type="eggNOG" id="COG0473">
    <property type="taxonomic scope" value="Bacteria"/>
</dbReference>
<dbReference type="HOGENOM" id="CLU_031953_0_1_11"/>
<dbReference type="OrthoDB" id="5289857at2"/>
<dbReference type="UniPathway" id="UPA00048">
    <property type="reaction ID" value="UER00072"/>
</dbReference>
<dbReference type="Proteomes" id="UP000002077">
    <property type="component" value="Chromosome"/>
</dbReference>
<dbReference type="GO" id="GO:0005737">
    <property type="term" value="C:cytoplasm"/>
    <property type="evidence" value="ECO:0007669"/>
    <property type="project" value="UniProtKB-SubCell"/>
</dbReference>
<dbReference type="GO" id="GO:0003862">
    <property type="term" value="F:3-isopropylmalate dehydrogenase activity"/>
    <property type="evidence" value="ECO:0007669"/>
    <property type="project" value="UniProtKB-UniRule"/>
</dbReference>
<dbReference type="GO" id="GO:0000287">
    <property type="term" value="F:magnesium ion binding"/>
    <property type="evidence" value="ECO:0007669"/>
    <property type="project" value="InterPro"/>
</dbReference>
<dbReference type="GO" id="GO:0051287">
    <property type="term" value="F:NAD binding"/>
    <property type="evidence" value="ECO:0007669"/>
    <property type="project" value="InterPro"/>
</dbReference>
<dbReference type="GO" id="GO:0009098">
    <property type="term" value="P:L-leucine biosynthetic process"/>
    <property type="evidence" value="ECO:0007669"/>
    <property type="project" value="UniProtKB-UniRule"/>
</dbReference>
<dbReference type="Gene3D" id="3.40.718.10">
    <property type="entry name" value="Isopropylmalate Dehydrogenase"/>
    <property type="match status" value="1"/>
</dbReference>
<dbReference type="HAMAP" id="MF_01035">
    <property type="entry name" value="LeuB_type2"/>
    <property type="match status" value="1"/>
</dbReference>
<dbReference type="InterPro" id="IPR050501">
    <property type="entry name" value="ICDH/IPMDH"/>
</dbReference>
<dbReference type="InterPro" id="IPR019818">
    <property type="entry name" value="IsoCit/isopropylmalate_DH_CS"/>
</dbReference>
<dbReference type="InterPro" id="IPR024084">
    <property type="entry name" value="IsoPropMal-DH-like_dom"/>
</dbReference>
<dbReference type="InterPro" id="IPR023698">
    <property type="entry name" value="LeuB_actb"/>
</dbReference>
<dbReference type="NCBIfam" id="NF002898">
    <property type="entry name" value="PRK03437.1"/>
    <property type="match status" value="1"/>
</dbReference>
<dbReference type="PANTHER" id="PTHR43275">
    <property type="entry name" value="D-MALATE DEHYDROGENASE [DECARBOXYLATING]"/>
    <property type="match status" value="1"/>
</dbReference>
<dbReference type="PANTHER" id="PTHR43275:SF1">
    <property type="entry name" value="D-MALATE DEHYDROGENASE [DECARBOXYLATING]"/>
    <property type="match status" value="1"/>
</dbReference>
<dbReference type="Pfam" id="PF00180">
    <property type="entry name" value="Iso_dh"/>
    <property type="match status" value="1"/>
</dbReference>
<dbReference type="SMART" id="SM01329">
    <property type="entry name" value="Iso_dh"/>
    <property type="match status" value="1"/>
</dbReference>
<dbReference type="SUPFAM" id="SSF53659">
    <property type="entry name" value="Isocitrate/Isopropylmalate dehydrogenase-like"/>
    <property type="match status" value="1"/>
</dbReference>
<dbReference type="PROSITE" id="PS00470">
    <property type="entry name" value="IDH_IMDH"/>
    <property type="match status" value="1"/>
</dbReference>
<sequence length="339" mass="35934">MKLAVIGGDGIGPEVTAEALKVLRAVRQDVEVTDYDLGARRYLRNGELLSDADFASLREHDAILLGAIGAPGEVPPGVLERGLLLKMRFALDHHVNLRPSKLYPTSTSPLANPGDIDFVVVREGTEGLYCGNGGTLREGTEHEVASEVSQNTRFGVERVVRDAFQRAMGRRKHVTLVHKTNVLVNAGGLWQRTVNEVAQEFPEVTVDYNHIDAATIYMVTDPARYDVIVTDNLFGDILTDLAGAVTGGIGLAASGNIDASGANPSMFEPVHGSAPDIAGKGIADPTAAILSAAMLLRHLGDEENAVRIEEAVAADVSARGDAQARTTEIGDRIAAALSA</sequence>
<feature type="chain" id="PRO_1000149450" description="3-isopropylmalate dehydrogenase">
    <location>
        <begin position="1"/>
        <end position="339"/>
    </location>
</feature>
<feature type="binding site" evidence="1">
    <location>
        <position position="88"/>
    </location>
    <ligand>
        <name>substrate</name>
    </ligand>
</feature>
<feature type="binding site" evidence="1">
    <location>
        <position position="98"/>
    </location>
    <ligand>
        <name>substrate</name>
    </ligand>
</feature>
<feature type="binding site" evidence="1">
    <location>
        <position position="122"/>
    </location>
    <ligand>
        <name>substrate</name>
    </ligand>
</feature>
<feature type="binding site" evidence="1">
    <location>
        <position position="212"/>
    </location>
    <ligand>
        <name>Mg(2+)</name>
        <dbReference type="ChEBI" id="CHEBI:18420"/>
    </ligand>
</feature>
<feature type="binding site" evidence="1">
    <location>
        <position position="212"/>
    </location>
    <ligand>
        <name>substrate</name>
    </ligand>
</feature>
<feature type="binding site" evidence="1">
    <location>
        <position position="236"/>
    </location>
    <ligand>
        <name>Mg(2+)</name>
        <dbReference type="ChEBI" id="CHEBI:18420"/>
    </ligand>
</feature>
<feature type="binding site" evidence="1">
    <location>
        <position position="240"/>
    </location>
    <ligand>
        <name>Mg(2+)</name>
        <dbReference type="ChEBI" id="CHEBI:18420"/>
    </ligand>
</feature>
<feature type="binding site" evidence="1">
    <location>
        <begin position="272"/>
        <end position="284"/>
    </location>
    <ligand>
        <name>NAD(+)</name>
        <dbReference type="ChEBI" id="CHEBI:57540"/>
    </ligand>
</feature>
<feature type="site" description="Important for catalysis" evidence="1">
    <location>
        <position position="129"/>
    </location>
</feature>
<feature type="site" description="Important for catalysis" evidence="1">
    <location>
        <position position="179"/>
    </location>
</feature>
<proteinExistence type="inferred from homology"/>
<reference key="1">
    <citation type="journal article" date="2010" name="BMC Genomics">
        <title>Complete genome sequence and lifestyle of black-pigmented Corynebacterium aurimucosum ATCC 700975 (formerly C. nigricans CN-1) isolated from a vaginal swab of a woman with spontaneous abortion.</title>
        <authorList>
            <person name="Trost E."/>
            <person name="Gotker S."/>
            <person name="Schneider J."/>
            <person name="Schneiker-Bekel S."/>
            <person name="Szczepanowski R."/>
            <person name="Tilker A."/>
            <person name="Viehoever P."/>
            <person name="Arnold W."/>
            <person name="Bekel T."/>
            <person name="Blom J."/>
            <person name="Gartemann K.H."/>
            <person name="Linke B."/>
            <person name="Goesmann A."/>
            <person name="Puhler A."/>
            <person name="Shukla S.K."/>
            <person name="Tauch A."/>
        </authorList>
    </citation>
    <scope>NUCLEOTIDE SEQUENCE [LARGE SCALE GENOMIC DNA]</scope>
    <source>
        <strain>ATCC 700975 / DSM 44827 / CIP 107346 / CN-1</strain>
    </source>
</reference>
<evidence type="ECO:0000255" key="1">
    <source>
        <dbReference type="HAMAP-Rule" id="MF_01035"/>
    </source>
</evidence>
<name>LEU3_CORA7</name>
<comment type="function">
    <text evidence="1">Catalyzes the oxidation of 3-carboxy-2-hydroxy-4-methylpentanoate (3-isopropylmalate) to 3-carboxy-4-methyl-2-oxopentanoate. The product decarboxylates to 4-methyl-2 oxopentanoate.</text>
</comment>
<comment type="catalytic activity">
    <reaction evidence="1">
        <text>(2R,3S)-3-isopropylmalate + NAD(+) = 4-methyl-2-oxopentanoate + CO2 + NADH</text>
        <dbReference type="Rhea" id="RHEA:32271"/>
        <dbReference type="ChEBI" id="CHEBI:16526"/>
        <dbReference type="ChEBI" id="CHEBI:17865"/>
        <dbReference type="ChEBI" id="CHEBI:35121"/>
        <dbReference type="ChEBI" id="CHEBI:57540"/>
        <dbReference type="ChEBI" id="CHEBI:57945"/>
        <dbReference type="EC" id="1.1.1.85"/>
    </reaction>
</comment>
<comment type="cofactor">
    <cofactor evidence="1">
        <name>Mg(2+)</name>
        <dbReference type="ChEBI" id="CHEBI:18420"/>
    </cofactor>
    <cofactor evidence="1">
        <name>Mn(2+)</name>
        <dbReference type="ChEBI" id="CHEBI:29035"/>
    </cofactor>
    <text evidence="1">Binds 1 Mg(2+) or Mn(2+) ion per subunit.</text>
</comment>
<comment type="pathway">
    <text evidence="1">Amino-acid biosynthesis; L-leucine biosynthesis; L-leucine from 3-methyl-2-oxobutanoate: step 3/4.</text>
</comment>
<comment type="subunit">
    <text evidence="1">Homodimer.</text>
</comment>
<comment type="subcellular location">
    <subcellularLocation>
        <location evidence="1">Cytoplasm</location>
    </subcellularLocation>
</comment>
<comment type="similarity">
    <text evidence="1">Belongs to the isocitrate and isopropylmalate dehydrogenases family. LeuB type 2 subfamily.</text>
</comment>
<gene>
    <name evidence="1" type="primary">leuB</name>
    <name type="ordered locus">cauri_1136</name>
</gene>
<protein>
    <recommendedName>
        <fullName evidence="1">3-isopropylmalate dehydrogenase</fullName>
        <ecNumber evidence="1">1.1.1.85</ecNumber>
    </recommendedName>
    <alternativeName>
        <fullName evidence="1">3-IPM-DH</fullName>
    </alternativeName>
    <alternativeName>
        <fullName evidence="1">Beta-IPM dehydrogenase</fullName>
        <shortName evidence="1">IMDH</shortName>
    </alternativeName>
</protein>
<organism>
    <name type="scientific">Corynebacterium aurimucosum (strain ATCC 700975 / DSM 44827 / CIP 107346 / CN-1)</name>
    <name type="common">Corynebacterium nigricans</name>
    <dbReference type="NCBI Taxonomy" id="548476"/>
    <lineage>
        <taxon>Bacteria</taxon>
        <taxon>Bacillati</taxon>
        <taxon>Actinomycetota</taxon>
        <taxon>Actinomycetes</taxon>
        <taxon>Mycobacteriales</taxon>
        <taxon>Corynebacteriaceae</taxon>
        <taxon>Corynebacterium</taxon>
    </lineage>
</organism>
<keyword id="KW-0028">Amino-acid biosynthesis</keyword>
<keyword id="KW-0100">Branched-chain amino acid biosynthesis</keyword>
<keyword id="KW-0963">Cytoplasm</keyword>
<keyword id="KW-0432">Leucine biosynthesis</keyword>
<keyword id="KW-0460">Magnesium</keyword>
<keyword id="KW-0464">Manganese</keyword>
<keyword id="KW-0479">Metal-binding</keyword>
<keyword id="KW-0520">NAD</keyword>
<keyword id="KW-0560">Oxidoreductase</keyword>
<keyword id="KW-1185">Reference proteome</keyword>